<dbReference type="EC" id="3.1.26.-"/>
<dbReference type="EC" id="3.6.4.-"/>
<dbReference type="EMBL" id="CM001232">
    <property type="protein sequence ID" value="EHA54708.1"/>
    <property type="molecule type" value="Genomic_DNA"/>
</dbReference>
<dbReference type="RefSeq" id="XP_003714515.1">
    <property type="nucleotide sequence ID" value="XM_003714467.1"/>
</dbReference>
<dbReference type="SMR" id="A4RKC3"/>
<dbReference type="STRING" id="242507.A4RKC3"/>
<dbReference type="EnsemblFungi" id="MGG_01541T0">
    <property type="protein sequence ID" value="MGG_01541T0"/>
    <property type="gene ID" value="MGG_01541"/>
</dbReference>
<dbReference type="GeneID" id="2679399"/>
<dbReference type="KEGG" id="mgr:MGG_01541"/>
<dbReference type="VEuPathDB" id="FungiDB:MGG_01541"/>
<dbReference type="eggNOG" id="KOG0701">
    <property type="taxonomic scope" value="Eukaryota"/>
</dbReference>
<dbReference type="HOGENOM" id="CLU_000907_4_3_1"/>
<dbReference type="InParanoid" id="A4RKC3"/>
<dbReference type="OMA" id="YHVNRMC"/>
<dbReference type="OrthoDB" id="416741at2759"/>
<dbReference type="Proteomes" id="UP000009058">
    <property type="component" value="Chromosome 2"/>
</dbReference>
<dbReference type="GO" id="GO:0005737">
    <property type="term" value="C:cytoplasm"/>
    <property type="evidence" value="ECO:0007669"/>
    <property type="project" value="TreeGrafter"/>
</dbReference>
<dbReference type="GO" id="GO:0005634">
    <property type="term" value="C:nucleus"/>
    <property type="evidence" value="ECO:0007669"/>
    <property type="project" value="TreeGrafter"/>
</dbReference>
<dbReference type="GO" id="GO:0005524">
    <property type="term" value="F:ATP binding"/>
    <property type="evidence" value="ECO:0007669"/>
    <property type="project" value="UniProtKB-KW"/>
</dbReference>
<dbReference type="GO" id="GO:0003677">
    <property type="term" value="F:DNA binding"/>
    <property type="evidence" value="ECO:0007669"/>
    <property type="project" value="InterPro"/>
</dbReference>
<dbReference type="GO" id="GO:0004386">
    <property type="term" value="F:helicase activity"/>
    <property type="evidence" value="ECO:0007669"/>
    <property type="project" value="UniProtKB-KW"/>
</dbReference>
<dbReference type="GO" id="GO:0046872">
    <property type="term" value="F:metal ion binding"/>
    <property type="evidence" value="ECO:0007669"/>
    <property type="project" value="UniProtKB-KW"/>
</dbReference>
<dbReference type="GO" id="GO:0004525">
    <property type="term" value="F:ribonuclease III activity"/>
    <property type="evidence" value="ECO:0007669"/>
    <property type="project" value="InterPro"/>
</dbReference>
<dbReference type="GO" id="GO:0003723">
    <property type="term" value="F:RNA binding"/>
    <property type="evidence" value="ECO:0007669"/>
    <property type="project" value="UniProtKB-KW"/>
</dbReference>
<dbReference type="GO" id="GO:0051607">
    <property type="term" value="P:defense response to virus"/>
    <property type="evidence" value="ECO:0007669"/>
    <property type="project" value="UniProtKB-KW"/>
</dbReference>
<dbReference type="GO" id="GO:0050688">
    <property type="term" value="P:regulation of defense response to virus"/>
    <property type="evidence" value="ECO:0007669"/>
    <property type="project" value="UniProtKB-KW"/>
</dbReference>
<dbReference type="GO" id="GO:0030422">
    <property type="term" value="P:siRNA processing"/>
    <property type="evidence" value="ECO:0007669"/>
    <property type="project" value="TreeGrafter"/>
</dbReference>
<dbReference type="CDD" id="cd18034">
    <property type="entry name" value="DEXHc_dicer"/>
    <property type="match status" value="1"/>
</dbReference>
<dbReference type="CDD" id="cd00593">
    <property type="entry name" value="RIBOc"/>
    <property type="match status" value="2"/>
</dbReference>
<dbReference type="CDD" id="cd18802">
    <property type="entry name" value="SF2_C_dicer"/>
    <property type="match status" value="1"/>
</dbReference>
<dbReference type="FunFam" id="1.10.1520.10:FF:000015">
    <property type="entry name" value="Dicer-like protein 1"/>
    <property type="match status" value="1"/>
</dbReference>
<dbReference type="FunFam" id="3.40.50.300:FF:000628">
    <property type="entry name" value="Endoribonuclease Dicer"/>
    <property type="match status" value="1"/>
</dbReference>
<dbReference type="Gene3D" id="3.30.160.380">
    <property type="entry name" value="Dicer dimerisation domain"/>
    <property type="match status" value="1"/>
</dbReference>
<dbReference type="Gene3D" id="3.40.50.300">
    <property type="entry name" value="P-loop containing nucleotide triphosphate hydrolases"/>
    <property type="match status" value="2"/>
</dbReference>
<dbReference type="Gene3D" id="1.10.1520.10">
    <property type="entry name" value="Ribonuclease III domain"/>
    <property type="match status" value="2"/>
</dbReference>
<dbReference type="InterPro" id="IPR038248">
    <property type="entry name" value="Dicer_dimer_sf"/>
</dbReference>
<dbReference type="InterPro" id="IPR005034">
    <property type="entry name" value="Dicer_dimerisation_dom"/>
</dbReference>
<dbReference type="InterPro" id="IPR056755">
    <property type="entry name" value="DSRM_2"/>
</dbReference>
<dbReference type="InterPro" id="IPR006935">
    <property type="entry name" value="Helicase/UvrB_N"/>
</dbReference>
<dbReference type="InterPro" id="IPR014001">
    <property type="entry name" value="Helicase_ATP-bd"/>
</dbReference>
<dbReference type="InterPro" id="IPR001650">
    <property type="entry name" value="Helicase_C-like"/>
</dbReference>
<dbReference type="InterPro" id="IPR027417">
    <property type="entry name" value="P-loop_NTPase"/>
</dbReference>
<dbReference type="InterPro" id="IPR003100">
    <property type="entry name" value="PAZ_dom"/>
</dbReference>
<dbReference type="InterPro" id="IPR000999">
    <property type="entry name" value="RNase_III_dom"/>
</dbReference>
<dbReference type="InterPro" id="IPR036389">
    <property type="entry name" value="RNase_III_sf"/>
</dbReference>
<dbReference type="PANTHER" id="PTHR14950:SF62">
    <property type="entry name" value="DICER-LIKE PROTEIN 1"/>
    <property type="match status" value="1"/>
</dbReference>
<dbReference type="PANTHER" id="PTHR14950">
    <property type="entry name" value="DICER-RELATED"/>
    <property type="match status" value="1"/>
</dbReference>
<dbReference type="Pfam" id="PF03368">
    <property type="entry name" value="Dicer_dimer"/>
    <property type="match status" value="1"/>
</dbReference>
<dbReference type="Pfam" id="PF24995">
    <property type="entry name" value="DSRM_2"/>
    <property type="match status" value="1"/>
</dbReference>
<dbReference type="Pfam" id="PF00271">
    <property type="entry name" value="Helicase_C"/>
    <property type="match status" value="1"/>
</dbReference>
<dbReference type="Pfam" id="PF04851">
    <property type="entry name" value="ResIII"/>
    <property type="match status" value="1"/>
</dbReference>
<dbReference type="Pfam" id="PF00636">
    <property type="entry name" value="Ribonuclease_3"/>
    <property type="match status" value="2"/>
</dbReference>
<dbReference type="SMART" id="SM00487">
    <property type="entry name" value="DEXDc"/>
    <property type="match status" value="1"/>
</dbReference>
<dbReference type="SMART" id="SM00490">
    <property type="entry name" value="HELICc"/>
    <property type="match status" value="1"/>
</dbReference>
<dbReference type="SMART" id="SM00535">
    <property type="entry name" value="RIBOc"/>
    <property type="match status" value="2"/>
</dbReference>
<dbReference type="SUPFAM" id="SSF52540">
    <property type="entry name" value="P-loop containing nucleoside triphosphate hydrolases"/>
    <property type="match status" value="1"/>
</dbReference>
<dbReference type="SUPFAM" id="SSF69065">
    <property type="entry name" value="RNase III domain-like"/>
    <property type="match status" value="2"/>
</dbReference>
<dbReference type="PROSITE" id="PS51327">
    <property type="entry name" value="DICER_DSRBF"/>
    <property type="match status" value="1"/>
</dbReference>
<dbReference type="PROSITE" id="PS51192">
    <property type="entry name" value="HELICASE_ATP_BIND_1"/>
    <property type="match status" value="1"/>
</dbReference>
<dbReference type="PROSITE" id="PS51194">
    <property type="entry name" value="HELICASE_CTER"/>
    <property type="match status" value="1"/>
</dbReference>
<dbReference type="PROSITE" id="PS50821">
    <property type="entry name" value="PAZ"/>
    <property type="match status" value="1"/>
</dbReference>
<dbReference type="PROSITE" id="PS00517">
    <property type="entry name" value="RNASE_3_1"/>
    <property type="match status" value="1"/>
</dbReference>
<dbReference type="PROSITE" id="PS50142">
    <property type="entry name" value="RNASE_3_2"/>
    <property type="match status" value="2"/>
</dbReference>
<comment type="function">
    <text evidence="9">Dicer-like endonuclease which seems not to be involved in cleaving double-stranded RNA in the RNA interference (RNAi) pathway, contrary to its DCL2 counterpart.</text>
</comment>
<comment type="cofactor">
    <cofactor evidence="1">
        <name>Mg(2+)</name>
        <dbReference type="ChEBI" id="CHEBI:18420"/>
    </cofactor>
    <cofactor evidence="1">
        <name>Mn(2+)</name>
        <dbReference type="ChEBI" id="CHEBI:29035"/>
    </cofactor>
</comment>
<comment type="similarity">
    <text evidence="7">Belongs to the helicase family. Dicer subfamily.</text>
</comment>
<protein>
    <recommendedName>
        <fullName>Dicer-like protein 1</fullName>
    </recommendedName>
    <domain>
        <recommendedName>
            <fullName>Endoribonuclease DCL1</fullName>
            <ecNumber>3.1.26.-</ecNumber>
        </recommendedName>
    </domain>
    <domain>
        <recommendedName>
            <fullName>ATP-dependent helicase DCL1</fullName>
            <ecNumber>3.6.4.-</ecNumber>
        </recommendedName>
    </domain>
</protein>
<gene>
    <name type="primary">DCL1</name>
    <name type="synonym">MDL1</name>
    <name type="ORF">MGG_01541</name>
</gene>
<proteinExistence type="inferred from homology"/>
<evidence type="ECO:0000250" key="1"/>
<evidence type="ECO:0000250" key="2">
    <source>
        <dbReference type="UniProtKB" id="Q09884"/>
    </source>
</evidence>
<evidence type="ECO:0000255" key="3">
    <source>
        <dbReference type="PROSITE-ProRule" id="PRU00142"/>
    </source>
</evidence>
<evidence type="ECO:0000255" key="4">
    <source>
        <dbReference type="PROSITE-ProRule" id="PRU00177"/>
    </source>
</evidence>
<evidence type="ECO:0000255" key="5">
    <source>
        <dbReference type="PROSITE-ProRule" id="PRU00541"/>
    </source>
</evidence>
<evidence type="ECO:0000255" key="6">
    <source>
        <dbReference type="PROSITE-ProRule" id="PRU00542"/>
    </source>
</evidence>
<evidence type="ECO:0000255" key="7">
    <source>
        <dbReference type="PROSITE-ProRule" id="PRU00657"/>
    </source>
</evidence>
<evidence type="ECO:0000256" key="8">
    <source>
        <dbReference type="SAM" id="MobiDB-lite"/>
    </source>
</evidence>
<evidence type="ECO:0000269" key="9">
    <source>
    </source>
</evidence>
<reference key="1">
    <citation type="journal article" date="2005" name="Nature">
        <title>The genome sequence of the rice blast fungus Magnaporthe grisea.</title>
        <authorList>
            <person name="Dean R.A."/>
            <person name="Talbot N.J."/>
            <person name="Ebbole D.J."/>
            <person name="Farman M.L."/>
            <person name="Mitchell T.K."/>
            <person name="Orbach M.J."/>
            <person name="Thon M.R."/>
            <person name="Kulkarni R."/>
            <person name="Xu J.-R."/>
            <person name="Pan H."/>
            <person name="Read N.D."/>
            <person name="Lee Y.-H."/>
            <person name="Carbone I."/>
            <person name="Brown D."/>
            <person name="Oh Y.Y."/>
            <person name="Donofrio N."/>
            <person name="Jeong J.S."/>
            <person name="Soanes D.M."/>
            <person name="Djonovic S."/>
            <person name="Kolomiets E."/>
            <person name="Rehmeyer C."/>
            <person name="Li W."/>
            <person name="Harding M."/>
            <person name="Kim S."/>
            <person name="Lebrun M.-H."/>
            <person name="Bohnert H."/>
            <person name="Coughlan S."/>
            <person name="Butler J."/>
            <person name="Calvo S.E."/>
            <person name="Ma L.-J."/>
            <person name="Nicol R."/>
            <person name="Purcell S."/>
            <person name="Nusbaum C."/>
            <person name="Galagan J.E."/>
            <person name="Birren B.W."/>
        </authorList>
    </citation>
    <scope>NUCLEOTIDE SEQUENCE [LARGE SCALE GENOMIC DNA]</scope>
    <source>
        <strain>70-15 / ATCC MYA-4617 / FGSC 8958</strain>
    </source>
</reference>
<reference key="2">
    <citation type="journal article" date="2004" name="J. Biol. Chem.">
        <title>One of the two Dicer-like proteins in the filamentous fungi Magnaporthe oryzae genome is responsible for hairpin RNA-triggered RNA silencing and related small interfering RNA accumulation.</title>
        <authorList>
            <person name="Kadotani N."/>
            <person name="Nakayashiki H."/>
            <person name="Tosa Y."/>
            <person name="Mayama S."/>
        </authorList>
    </citation>
    <scope>FUNCTION</scope>
</reference>
<organism>
    <name type="scientific">Pyricularia oryzae (strain 70-15 / ATCC MYA-4617 / FGSC 8958)</name>
    <name type="common">Rice blast fungus</name>
    <name type="synonym">Magnaporthe oryzae</name>
    <dbReference type="NCBI Taxonomy" id="242507"/>
    <lineage>
        <taxon>Eukaryota</taxon>
        <taxon>Fungi</taxon>
        <taxon>Dikarya</taxon>
        <taxon>Ascomycota</taxon>
        <taxon>Pezizomycotina</taxon>
        <taxon>Sordariomycetes</taxon>
        <taxon>Sordariomycetidae</taxon>
        <taxon>Magnaporthales</taxon>
        <taxon>Pyriculariaceae</taxon>
        <taxon>Pyricularia</taxon>
    </lineage>
</organism>
<sequence length="1591" mass="180666">MEVHDGLKSPDKAAKSRYDDDRIDQDSEDEAVRLVANPDPSKPRKISERKRADQAAFESWVNDNKIRLSLPSATKSRRSGIRELFSSDETLETRPTRTRPRERVIEGPREYQIELFERAKQKNTIAVLDTGTGKTLIAILLIRHIIELELGARWQGREKRITFFLVDKVALVRQQTDHIRANLDFPVTGLHGDTVRNLWYSKEYFEKLLQEQEVVVCTAEILYRCLHRSYLNISQVSLVVFDEAHHAKKNHVYARIIKDFYLMEEDCQKRPRIFGMTASPIDTKDTCISYERATHELESLLHSEIATISDRDLLKVIGSRPQEVRKSYARVLRQENTELCNQLRELVGNHPLFKQTFDSAEFAVTELGAWCADKLWELCFREEAVSTLDGRVEGSRARDPDEVGESSHEVSNAREALSLVQQWSFSPPEDGSLSTKTHKLIEILAECFSQASAGNAIQCIVFVKRRDTAVLLNALCEQAEIRTKIPDLKGAFLIGAGRGGNAAFTTTRQQEQTVSRFRDGEINCLFATSIAEEGLDIPGCNVVIRFDLHGTTIQYIQSRGRARMRNSWFIHMTEFGNPEHNRRWFQDRVNEQKMRDFCLSLPKDRIMEKAEVDDVLRGDQSQKIFVVPGSKASLTFKQSLVVLAEFVATLPARPDEILSVDYTVVPVFGGFQGEVYLPASSPLRSAMGGVYRSKQLAKCAAAYAMCIQLYNSNYLDDHLKSTLAKVLPAMRNARLAVSSKKRKSYNMRTKPVLWSEVGPLTELYAMVLSLAQPGAAYYHSRPILLLTRKPLPEIAQFPLFFGKGSSRRSNVRCIPLAHPWSPTTTQVEGICAFTLCIFRDIFSKDFQASGTDMPYFLAPSTGIEHGTDLSSLVNPERIIDWATVHRTTTTDRVPYNFNEPDEFFQDKYVSDPFDGSRKFFMRKVRRDLKPQDKVPEGVPAPSKWRAVEHTILNYSVSLWKKSRAGHNSRQDQPVVEAELAPLRRNLLDETDGENSTGPQTCYLVLETLLISQIPVDTVVMAYTFPAIIYRLENSLISLEACQNLGLDIPIDIALIAMTKDSDNSDDHDEAPINFQSGMGQNYERLEFLGDCFLKMATSIALYTLVEGDEFEYHVERMLDICNKNLLNWALESNLQEHIRSKSFNRRTWYPPGLKLLKGKKTEVDDEHALGDKSIADVCEALIGAAYLTAQAQSSPNFDLAVKAVTVMTHSKTHTMQAWSDYYASYQCPEWLSTPPSQTQLELCSQIKNKMGYRFKNPRLLRCAFMHPSYPRQYENIPSYQRLEFLGDSLLDMVCVDYLFKKHPDKDPQWLTEHKMAMVSNQFFGCVAVGLGFHRHLIHMQPALGGSITEWAELVTKKREEARQLAVRRGQREEDYARDFWIEVHHPPKCLPDILEAYVGALFVDTGYDYSAVVGFFDRHIKPYFADMSIYDMYSSKHPVTHITSIITTQFGCSSFRLMVHEIPDDVQGEGLVTGAVKVVAACMIHGEVRCHAVAASGRYAKLAVAKQAVAIYEDMSPTEFRLRHGCNCKPEDGDGDHGVLVDHRADCEPEEPLRKQDPPAKSVVDVDGKTIAEMRLRHSKQMNDQEECLSW</sequence>
<feature type="chain" id="PRO_0000306781" description="Dicer-like protein 1">
    <location>
        <begin position="1"/>
        <end position="1591"/>
    </location>
</feature>
<feature type="domain" description="Helicase ATP-binding" evidence="5">
    <location>
        <begin position="115"/>
        <end position="298"/>
    </location>
</feature>
<feature type="domain" description="Helicase C-terminal" evidence="6">
    <location>
        <begin position="439"/>
        <end position="607"/>
    </location>
</feature>
<feature type="domain" description="Dicer dsRNA-binding fold" evidence="7">
    <location>
        <begin position="639"/>
        <end position="729"/>
    </location>
</feature>
<feature type="domain" description="PAZ" evidence="3">
    <location>
        <begin position="888"/>
        <end position="1012"/>
    </location>
</feature>
<feature type="domain" description="RNase III 1" evidence="4">
    <location>
        <begin position="1050"/>
        <end position="1190"/>
    </location>
</feature>
<feature type="domain" description="RNase III 2" evidence="4">
    <location>
        <begin position="1243"/>
        <end position="1406"/>
    </location>
</feature>
<feature type="domain" description="DRBM">
    <location>
        <begin position="1440"/>
        <end position="1514"/>
    </location>
</feature>
<feature type="region of interest" description="Disordered" evidence="8">
    <location>
        <begin position="1"/>
        <end position="52"/>
    </location>
</feature>
<feature type="short sequence motif" description="DEAH box">
    <location>
        <begin position="242"/>
        <end position="245"/>
    </location>
</feature>
<feature type="compositionally biased region" description="Basic and acidic residues" evidence="8">
    <location>
        <begin position="1"/>
        <end position="20"/>
    </location>
</feature>
<feature type="compositionally biased region" description="Basic and acidic residues" evidence="8">
    <location>
        <begin position="41"/>
        <end position="52"/>
    </location>
</feature>
<feature type="binding site" evidence="5">
    <location>
        <begin position="128"/>
        <end position="135"/>
    </location>
    <ligand>
        <name>ATP</name>
        <dbReference type="ChEBI" id="CHEBI:30616"/>
    </ligand>
</feature>
<feature type="binding site" evidence="1">
    <location>
        <position position="1283"/>
    </location>
    <ligand>
        <name>Mg(2+)</name>
        <dbReference type="ChEBI" id="CHEBI:18420"/>
    </ligand>
</feature>
<feature type="binding site" evidence="1">
    <location>
        <position position="1392"/>
    </location>
    <ligand>
        <name>Mg(2+)</name>
        <dbReference type="ChEBI" id="CHEBI:18420"/>
    </ligand>
</feature>
<feature type="binding site" evidence="1">
    <location>
        <position position="1395"/>
    </location>
    <ligand>
        <name>Mg(2+)</name>
        <dbReference type="ChEBI" id="CHEBI:18420"/>
    </ligand>
</feature>
<feature type="binding site" evidence="2">
    <location>
        <position position="1452"/>
    </location>
    <ligand>
        <name>Zn(2+)</name>
        <dbReference type="ChEBI" id="CHEBI:29105"/>
    </ligand>
</feature>
<feature type="binding site" evidence="2">
    <location>
        <position position="1485"/>
    </location>
    <ligand>
        <name>Zn(2+)</name>
        <dbReference type="ChEBI" id="CHEBI:29105"/>
    </ligand>
</feature>
<feature type="binding site" evidence="2">
    <location>
        <position position="1526"/>
    </location>
    <ligand>
        <name>Zn(2+)</name>
        <dbReference type="ChEBI" id="CHEBI:29105"/>
    </ligand>
</feature>
<feature type="binding site" evidence="2">
    <location>
        <position position="1528"/>
    </location>
    <ligand>
        <name>Zn(2+)</name>
        <dbReference type="ChEBI" id="CHEBI:29105"/>
    </ligand>
</feature>
<feature type="site" description="Important for activity" evidence="1">
    <location>
        <position position="1388"/>
    </location>
</feature>
<name>DCL1_PYRO7</name>
<accession>A4RKC3</accession>
<accession>G4MTF7</accession>
<keyword id="KW-0051">Antiviral defense</keyword>
<keyword id="KW-0930">Antiviral protein</keyword>
<keyword id="KW-0067">ATP-binding</keyword>
<keyword id="KW-0347">Helicase</keyword>
<keyword id="KW-0378">Hydrolase</keyword>
<keyword id="KW-0460">Magnesium</keyword>
<keyword id="KW-0464">Manganese</keyword>
<keyword id="KW-0479">Metal-binding</keyword>
<keyword id="KW-0547">Nucleotide-binding</keyword>
<keyword id="KW-1185">Reference proteome</keyword>
<keyword id="KW-0677">Repeat</keyword>
<keyword id="KW-0694">RNA-binding</keyword>
<keyword id="KW-0862">Zinc</keyword>